<gene>
    <name evidence="1" type="primary">rpsO</name>
    <name type="ordered locus">SPO3840</name>
</gene>
<evidence type="ECO:0000255" key="1">
    <source>
        <dbReference type="HAMAP-Rule" id="MF_01343"/>
    </source>
</evidence>
<evidence type="ECO:0000256" key="2">
    <source>
        <dbReference type="SAM" id="MobiDB-lite"/>
    </source>
</evidence>
<evidence type="ECO:0000305" key="3"/>
<sequence>MSITTEEKARVMKEYGTKDGDTGSPEVQVAILSSRIATLTEHFKTHKKDNHGRRGLLKLVAQRRKLLDYLKAKDEARYQSLIERLGLRR</sequence>
<proteinExistence type="inferred from homology"/>
<organism>
    <name type="scientific">Ruegeria pomeroyi (strain ATCC 700808 / DSM 15171 / DSS-3)</name>
    <name type="common">Silicibacter pomeroyi</name>
    <dbReference type="NCBI Taxonomy" id="246200"/>
    <lineage>
        <taxon>Bacteria</taxon>
        <taxon>Pseudomonadati</taxon>
        <taxon>Pseudomonadota</taxon>
        <taxon>Alphaproteobacteria</taxon>
        <taxon>Rhodobacterales</taxon>
        <taxon>Roseobacteraceae</taxon>
        <taxon>Ruegeria</taxon>
    </lineage>
</organism>
<keyword id="KW-1185">Reference proteome</keyword>
<keyword id="KW-0687">Ribonucleoprotein</keyword>
<keyword id="KW-0689">Ribosomal protein</keyword>
<keyword id="KW-0694">RNA-binding</keyword>
<keyword id="KW-0699">rRNA-binding</keyword>
<accession>Q5LLT1</accession>
<feature type="chain" id="PRO_0000115538" description="Small ribosomal subunit protein uS15">
    <location>
        <begin position="1"/>
        <end position="89"/>
    </location>
</feature>
<feature type="region of interest" description="Disordered" evidence="2">
    <location>
        <begin position="1"/>
        <end position="24"/>
    </location>
</feature>
<feature type="compositionally biased region" description="Basic and acidic residues" evidence="2">
    <location>
        <begin position="1"/>
        <end position="21"/>
    </location>
</feature>
<dbReference type="EMBL" id="CP000031">
    <property type="protein sequence ID" value="AAV97054.1"/>
    <property type="molecule type" value="Genomic_DNA"/>
</dbReference>
<dbReference type="RefSeq" id="WP_011049511.1">
    <property type="nucleotide sequence ID" value="NC_003911.12"/>
</dbReference>
<dbReference type="SMR" id="Q5LLT1"/>
<dbReference type="STRING" id="246200.SPO3840"/>
<dbReference type="PaxDb" id="246200-SPO3840"/>
<dbReference type="KEGG" id="sil:SPO3840"/>
<dbReference type="eggNOG" id="COG0184">
    <property type="taxonomic scope" value="Bacteria"/>
</dbReference>
<dbReference type="HOGENOM" id="CLU_148518_0_0_5"/>
<dbReference type="OrthoDB" id="9799262at2"/>
<dbReference type="Proteomes" id="UP000001023">
    <property type="component" value="Chromosome"/>
</dbReference>
<dbReference type="GO" id="GO:0022627">
    <property type="term" value="C:cytosolic small ribosomal subunit"/>
    <property type="evidence" value="ECO:0007669"/>
    <property type="project" value="TreeGrafter"/>
</dbReference>
<dbReference type="GO" id="GO:0019843">
    <property type="term" value="F:rRNA binding"/>
    <property type="evidence" value="ECO:0007669"/>
    <property type="project" value="UniProtKB-UniRule"/>
</dbReference>
<dbReference type="GO" id="GO:0003735">
    <property type="term" value="F:structural constituent of ribosome"/>
    <property type="evidence" value="ECO:0007669"/>
    <property type="project" value="InterPro"/>
</dbReference>
<dbReference type="GO" id="GO:0006412">
    <property type="term" value="P:translation"/>
    <property type="evidence" value="ECO:0007669"/>
    <property type="project" value="UniProtKB-UniRule"/>
</dbReference>
<dbReference type="CDD" id="cd00353">
    <property type="entry name" value="Ribosomal_S15p_S13e"/>
    <property type="match status" value="1"/>
</dbReference>
<dbReference type="FunFam" id="1.10.287.10:FF:000002">
    <property type="entry name" value="30S ribosomal protein S15"/>
    <property type="match status" value="1"/>
</dbReference>
<dbReference type="Gene3D" id="6.10.250.3130">
    <property type="match status" value="1"/>
</dbReference>
<dbReference type="Gene3D" id="1.10.287.10">
    <property type="entry name" value="S15/NS1, RNA-binding"/>
    <property type="match status" value="1"/>
</dbReference>
<dbReference type="HAMAP" id="MF_01343_B">
    <property type="entry name" value="Ribosomal_uS15_B"/>
    <property type="match status" value="1"/>
</dbReference>
<dbReference type="InterPro" id="IPR000589">
    <property type="entry name" value="Ribosomal_uS15"/>
</dbReference>
<dbReference type="InterPro" id="IPR005290">
    <property type="entry name" value="Ribosomal_uS15_bac-type"/>
</dbReference>
<dbReference type="InterPro" id="IPR009068">
    <property type="entry name" value="uS15_NS1_RNA-bd_sf"/>
</dbReference>
<dbReference type="NCBIfam" id="TIGR00952">
    <property type="entry name" value="S15_bact"/>
    <property type="match status" value="1"/>
</dbReference>
<dbReference type="PANTHER" id="PTHR23321">
    <property type="entry name" value="RIBOSOMAL PROTEIN S15, BACTERIAL AND ORGANELLAR"/>
    <property type="match status" value="1"/>
</dbReference>
<dbReference type="PANTHER" id="PTHR23321:SF26">
    <property type="entry name" value="SMALL RIBOSOMAL SUBUNIT PROTEIN US15M"/>
    <property type="match status" value="1"/>
</dbReference>
<dbReference type="Pfam" id="PF00312">
    <property type="entry name" value="Ribosomal_S15"/>
    <property type="match status" value="1"/>
</dbReference>
<dbReference type="SMART" id="SM01387">
    <property type="entry name" value="Ribosomal_S15"/>
    <property type="match status" value="1"/>
</dbReference>
<dbReference type="SUPFAM" id="SSF47060">
    <property type="entry name" value="S15/NS1 RNA-binding domain"/>
    <property type="match status" value="1"/>
</dbReference>
<dbReference type="PROSITE" id="PS00362">
    <property type="entry name" value="RIBOSOMAL_S15"/>
    <property type="match status" value="1"/>
</dbReference>
<comment type="function">
    <text evidence="1">One of the primary rRNA binding proteins, it binds directly to 16S rRNA where it helps nucleate assembly of the platform of the 30S subunit by binding and bridging several RNA helices of the 16S rRNA.</text>
</comment>
<comment type="function">
    <text evidence="1">Forms an intersubunit bridge (bridge B4) with the 23S rRNA of the 50S subunit in the ribosome.</text>
</comment>
<comment type="subunit">
    <text evidence="1">Part of the 30S ribosomal subunit. Forms a bridge to the 50S subunit in the 70S ribosome, contacting the 23S rRNA.</text>
</comment>
<comment type="similarity">
    <text evidence="1">Belongs to the universal ribosomal protein uS15 family.</text>
</comment>
<reference key="1">
    <citation type="journal article" date="2004" name="Nature">
        <title>Genome sequence of Silicibacter pomeroyi reveals adaptations to the marine environment.</title>
        <authorList>
            <person name="Moran M.A."/>
            <person name="Buchan A."/>
            <person name="Gonzalez J.M."/>
            <person name="Heidelberg J.F."/>
            <person name="Whitman W.B."/>
            <person name="Kiene R.P."/>
            <person name="Henriksen J.R."/>
            <person name="King G.M."/>
            <person name="Belas R."/>
            <person name="Fuqua C."/>
            <person name="Brinkac L.M."/>
            <person name="Lewis M."/>
            <person name="Johri S."/>
            <person name="Weaver B."/>
            <person name="Pai G."/>
            <person name="Eisen J.A."/>
            <person name="Rahe E."/>
            <person name="Sheldon W.M."/>
            <person name="Ye W."/>
            <person name="Miller T.R."/>
            <person name="Carlton J."/>
            <person name="Rasko D.A."/>
            <person name="Paulsen I.T."/>
            <person name="Ren Q."/>
            <person name="Daugherty S.C."/>
            <person name="DeBoy R.T."/>
            <person name="Dodson R.J."/>
            <person name="Durkin A.S."/>
            <person name="Madupu R."/>
            <person name="Nelson W.C."/>
            <person name="Sullivan S.A."/>
            <person name="Rosovitz M.J."/>
            <person name="Haft D.H."/>
            <person name="Selengut J."/>
            <person name="Ward N."/>
        </authorList>
    </citation>
    <scope>NUCLEOTIDE SEQUENCE [LARGE SCALE GENOMIC DNA]</scope>
    <source>
        <strain>ATCC 700808 / DSM 15171 / DSS-3</strain>
    </source>
</reference>
<reference key="2">
    <citation type="journal article" date="2014" name="Stand. Genomic Sci.">
        <title>An updated genome annotation for the model marine bacterium Ruegeria pomeroyi DSS-3.</title>
        <authorList>
            <person name="Rivers A.R."/>
            <person name="Smith C.B."/>
            <person name="Moran M.A."/>
        </authorList>
    </citation>
    <scope>GENOME REANNOTATION</scope>
    <source>
        <strain>ATCC 700808 / DSM 15171 / DSS-3</strain>
    </source>
</reference>
<name>RS15_RUEPO</name>
<protein>
    <recommendedName>
        <fullName evidence="1">Small ribosomal subunit protein uS15</fullName>
    </recommendedName>
    <alternativeName>
        <fullName evidence="3">30S ribosomal protein S15</fullName>
    </alternativeName>
</protein>